<name>EST1_CAEEL</name>
<protein>
    <recommendedName>
        <fullName>Gut esterase 1</fullName>
        <ecNumber>3.1.1.1</ecNumber>
    </recommendedName>
    <alternativeName>
        <fullName>Non-specific carboxylesterase</fullName>
    </alternativeName>
</protein>
<organism>
    <name type="scientific">Caenorhabditis elegans</name>
    <dbReference type="NCBI Taxonomy" id="6239"/>
    <lineage>
        <taxon>Eukaryota</taxon>
        <taxon>Metazoa</taxon>
        <taxon>Ecdysozoa</taxon>
        <taxon>Nematoda</taxon>
        <taxon>Chromadorea</taxon>
        <taxon>Rhabditida</taxon>
        <taxon>Rhabditina</taxon>
        <taxon>Rhabditomorpha</taxon>
        <taxon>Rhabditoidea</taxon>
        <taxon>Rhabditidae</taxon>
        <taxon>Peloderinae</taxon>
        <taxon>Caenorhabditis</taxon>
    </lineage>
</organism>
<comment type="catalytic activity">
    <reaction evidence="2">
        <text>a carboxylic ester + H2O = an alcohol + a carboxylate + H(+)</text>
        <dbReference type="Rhea" id="RHEA:21164"/>
        <dbReference type="ChEBI" id="CHEBI:15377"/>
        <dbReference type="ChEBI" id="CHEBI:15378"/>
        <dbReference type="ChEBI" id="CHEBI:29067"/>
        <dbReference type="ChEBI" id="CHEBI:30879"/>
        <dbReference type="ChEBI" id="CHEBI:33308"/>
        <dbReference type="EC" id="3.1.1.1"/>
    </reaction>
</comment>
<comment type="subcellular location">
    <subcellularLocation>
        <location>Endoplasmic reticulum lumen</location>
    </subcellularLocation>
</comment>
<comment type="tissue specificity">
    <text>Expressed only in the intestine.</text>
</comment>
<comment type="developmental stage">
    <text>Appears in mid-proliferation phase when the developing gut has four to eight cells.</text>
</comment>
<comment type="similarity">
    <text evidence="5">Belongs to the type-B carboxylesterase/lipase family.</text>
</comment>
<sequence length="562" mass="63722">MRIFLVSVILINACWAGPIVETNYGKVEGIEYEGAEVFLAIPFAKPPVDDLRFEKPVAPDPWEDVYPATQYRNDCTPHYRLVAQFSSYSGEDCLTLNIIKPKKAEKLPVLFWIHGGGYEIGSASQHGYEFFAKRYASQGVIVATVQYRLGFMGFFSEGTSDVQGNWGLFDQAAALEFVKSNIENFGGDPNQITIWGYSAGAASVSQLTMSPYTRDSYSKAIIMSASSFVGWATGPNVVETSKQLAEILGCPWPGAKECMKKKSLHEIFDAIEVQGWTTGTIDILRWSPVIDGDFMTKNPEELIKESPVKPTLIGMSNKEGSYFAALNMGRVIADFGLSPEDMPKVDEEFISEIIGRKLLYNNRYGENREKVWNDILDFYVKQGKPAEVKDLNGFYVDRYSELLSDITFNVPILREITSRVERKTPVWTYRMDHYDKNIWKKHIPEQARGSPHANEYHYLFDMPVMAKIDMKKEPDSWIQNDLIDMVISFAKTGVPQIEDVEWRPVSDPDDVNFLNIRSDGVSIEHGLFQEPLAFWNELRQREGFDLIDPTNSAMHSSNKDEL</sequence>
<feature type="signal peptide" evidence="4">
    <location>
        <begin position="1"/>
        <end position="16"/>
    </location>
</feature>
<feature type="chain" id="PRO_0000008549" description="Gut esterase 1">
    <location>
        <begin position="17"/>
        <end position="562"/>
    </location>
</feature>
<feature type="short sequence motif" description="Prevents secretion from ER">
    <location>
        <begin position="559"/>
        <end position="562"/>
    </location>
</feature>
<feature type="active site" description="Acyl-ester intermediate" evidence="2">
    <location>
        <position position="198"/>
    </location>
</feature>
<feature type="active site" description="Charge relay system" evidence="1">
    <location>
        <position position="319"/>
    </location>
</feature>
<feature type="active site" description="Charge relay system" evidence="1">
    <location>
        <position position="452"/>
    </location>
</feature>
<feature type="glycosylation site" description="N-linked (GlcNAc...) asparagine; atypical" evidence="3">
    <location>
        <position position="73"/>
    </location>
</feature>
<feature type="disulfide bond" evidence="1">
    <location>
        <begin position="75"/>
        <end position="93"/>
    </location>
</feature>
<feature type="disulfide bond" evidence="1">
    <location>
        <begin position="250"/>
        <end position="258"/>
    </location>
</feature>
<evidence type="ECO:0000250" key="1"/>
<evidence type="ECO:0000255" key="2">
    <source>
        <dbReference type="PROSITE-ProRule" id="PRU10039"/>
    </source>
</evidence>
<evidence type="ECO:0000269" key="3">
    <source>
    </source>
</evidence>
<evidence type="ECO:0000269" key="4">
    <source>
    </source>
</evidence>
<evidence type="ECO:0000305" key="5"/>
<dbReference type="EC" id="3.1.1.1"/>
<dbReference type="EMBL" id="M96145">
    <property type="protein sequence ID" value="AAA28057.1"/>
    <property type="molecule type" value="Genomic_DNA"/>
</dbReference>
<dbReference type="EMBL" id="FO081062">
    <property type="protein sequence ID" value="CCD68892.1"/>
    <property type="molecule type" value="Genomic_DNA"/>
</dbReference>
<dbReference type="PIR" id="S27800">
    <property type="entry name" value="S27800"/>
</dbReference>
<dbReference type="PIR" id="T32061">
    <property type="entry name" value="T32061"/>
</dbReference>
<dbReference type="RefSeq" id="NP_503411.1">
    <property type="nucleotide sequence ID" value="NM_071010.8"/>
</dbReference>
<dbReference type="SMR" id="Q04457"/>
<dbReference type="BioGRID" id="43700">
    <property type="interactions" value="1"/>
</dbReference>
<dbReference type="FunCoup" id="Q04457">
    <property type="interactions" value="83"/>
</dbReference>
<dbReference type="STRING" id="6239.R12A1.4.1"/>
<dbReference type="ESTHER" id="caeel-ges1e">
    <property type="family name" value="Carb_B_Nematoda"/>
</dbReference>
<dbReference type="GlyCosmos" id="Q04457">
    <property type="glycosylation" value="1 site, No reported glycans"/>
</dbReference>
<dbReference type="iPTMnet" id="Q04457"/>
<dbReference type="PaxDb" id="6239-R12A1.4"/>
<dbReference type="PeptideAtlas" id="Q04457"/>
<dbReference type="EnsemblMetazoa" id="R12A1.4.1">
    <property type="protein sequence ID" value="R12A1.4.1"/>
    <property type="gene ID" value="WBGene00001578"/>
</dbReference>
<dbReference type="GeneID" id="178633"/>
<dbReference type="KEGG" id="cel:CELE_R12A1.4"/>
<dbReference type="UCSC" id="R12A1.4.1">
    <property type="organism name" value="c. elegans"/>
</dbReference>
<dbReference type="AGR" id="WB:WBGene00001578"/>
<dbReference type="CTD" id="178633"/>
<dbReference type="WormBase" id="R12A1.4">
    <property type="protein sequence ID" value="CE28763"/>
    <property type="gene ID" value="WBGene00001578"/>
    <property type="gene designation" value="ges-1"/>
</dbReference>
<dbReference type="eggNOG" id="KOG1516">
    <property type="taxonomic scope" value="Eukaryota"/>
</dbReference>
<dbReference type="GeneTree" id="ENSGT00940000164234"/>
<dbReference type="HOGENOM" id="CLU_006586_13_3_1"/>
<dbReference type="InParanoid" id="Q04457"/>
<dbReference type="OMA" id="HANEYHY"/>
<dbReference type="OrthoDB" id="6846267at2759"/>
<dbReference type="PhylomeDB" id="Q04457"/>
<dbReference type="Reactome" id="R-CEL-112311">
    <property type="pathway name" value="Neurotransmitter clearance"/>
</dbReference>
<dbReference type="Reactome" id="R-CEL-1483191">
    <property type="pathway name" value="Synthesis of PC"/>
</dbReference>
<dbReference type="Reactome" id="R-CEL-2022377">
    <property type="pathway name" value="Metabolism of Angiotensinogen to Angiotensins"/>
</dbReference>
<dbReference type="Reactome" id="R-CEL-211945">
    <property type="pathway name" value="Phase I - Functionalization of compounds"/>
</dbReference>
<dbReference type="Reactome" id="R-CEL-5578768">
    <property type="pathway name" value="Physiological factors"/>
</dbReference>
<dbReference type="Reactome" id="R-CEL-9749641">
    <property type="pathway name" value="Aspirin ADME"/>
</dbReference>
<dbReference type="PRO" id="PR:Q04457"/>
<dbReference type="Proteomes" id="UP000001940">
    <property type="component" value="Chromosome V"/>
</dbReference>
<dbReference type="Bgee" id="WBGene00001578">
    <property type="expression patterns" value="Expressed in larva and 3 other cell types or tissues"/>
</dbReference>
<dbReference type="GO" id="GO:0005788">
    <property type="term" value="C:endoplasmic reticulum lumen"/>
    <property type="evidence" value="ECO:0007669"/>
    <property type="project" value="UniProtKB-SubCell"/>
</dbReference>
<dbReference type="GO" id="GO:0005777">
    <property type="term" value="C:peroxisome"/>
    <property type="evidence" value="ECO:0000314"/>
    <property type="project" value="WormBase"/>
</dbReference>
<dbReference type="GO" id="GO:0106435">
    <property type="term" value="F:carboxylesterase activity"/>
    <property type="evidence" value="ECO:0000314"/>
    <property type="project" value="WormBase"/>
</dbReference>
<dbReference type="GO" id="GO:0044248">
    <property type="term" value="P:cellular catabolic process"/>
    <property type="evidence" value="ECO:0000314"/>
    <property type="project" value="WormBase"/>
</dbReference>
<dbReference type="FunFam" id="3.40.50.1820:FF:000317">
    <property type="entry name" value="Carboxylic ester hydrolase"/>
    <property type="match status" value="1"/>
</dbReference>
<dbReference type="Gene3D" id="3.40.50.1820">
    <property type="entry name" value="alpha/beta hydrolase"/>
    <property type="match status" value="1"/>
</dbReference>
<dbReference type="InterPro" id="IPR029058">
    <property type="entry name" value="AB_hydrolase_fold"/>
</dbReference>
<dbReference type="InterPro" id="IPR002018">
    <property type="entry name" value="CarbesteraseB"/>
</dbReference>
<dbReference type="InterPro" id="IPR019826">
    <property type="entry name" value="Carboxylesterase_B_AS"/>
</dbReference>
<dbReference type="InterPro" id="IPR019819">
    <property type="entry name" value="Carboxylesterase_B_CS"/>
</dbReference>
<dbReference type="InterPro" id="IPR050309">
    <property type="entry name" value="Type-B_Carboxylest/Lipase"/>
</dbReference>
<dbReference type="PANTHER" id="PTHR11559">
    <property type="entry name" value="CARBOXYLESTERASE"/>
    <property type="match status" value="1"/>
</dbReference>
<dbReference type="Pfam" id="PF00135">
    <property type="entry name" value="COesterase"/>
    <property type="match status" value="1"/>
</dbReference>
<dbReference type="SUPFAM" id="SSF53474">
    <property type="entry name" value="alpha/beta-Hydrolases"/>
    <property type="match status" value="1"/>
</dbReference>
<dbReference type="PROSITE" id="PS00122">
    <property type="entry name" value="CARBOXYLESTERASE_B_1"/>
    <property type="match status" value="1"/>
</dbReference>
<dbReference type="PROSITE" id="PS00941">
    <property type="entry name" value="CARBOXYLESTERASE_B_2"/>
    <property type="match status" value="1"/>
</dbReference>
<dbReference type="PROSITE" id="PS00014">
    <property type="entry name" value="ER_TARGET"/>
    <property type="match status" value="1"/>
</dbReference>
<gene>
    <name type="primary">ges-1</name>
    <name type="ORF">R12A1.4</name>
</gene>
<keyword id="KW-0903">Direct protein sequencing</keyword>
<keyword id="KW-1015">Disulfide bond</keyword>
<keyword id="KW-0256">Endoplasmic reticulum</keyword>
<keyword id="KW-0325">Glycoprotein</keyword>
<keyword id="KW-0378">Hydrolase</keyword>
<keyword id="KW-1185">Reference proteome</keyword>
<keyword id="KW-0719">Serine esterase</keyword>
<keyword id="KW-0732">Signal</keyword>
<proteinExistence type="evidence at protein level"/>
<accession>Q04457</accession>
<accession>O16702</accession>
<reference key="1">
    <citation type="journal article" date="1993" name="J. Mol. Biol.">
        <title>The gut esterase gene (ges-1) from the nematodes Caenorhabditis elegans and Caenorhabditis briggsae.</title>
        <authorList>
            <person name="Kennedy B.P."/>
            <person name="Aamodt E.J."/>
            <person name="Allen F.L."/>
            <person name="Chung M.A."/>
            <person name="Heschl M.F.P."/>
            <person name="McGhee J.D."/>
        </authorList>
    </citation>
    <scope>NUCLEOTIDE SEQUENCE [GENOMIC DNA]</scope>
    <scope>PROTEIN SEQUENCE OF 17-54</scope>
</reference>
<reference key="2">
    <citation type="journal article" date="1998" name="Science">
        <title>Genome sequence of the nematode C. elegans: a platform for investigating biology.</title>
        <authorList>
            <consortium name="The C. elegans sequencing consortium"/>
        </authorList>
    </citation>
    <scope>NUCLEOTIDE SEQUENCE [LARGE SCALE GENOMIC DNA]</scope>
    <source>
        <strain>Bristol N2</strain>
    </source>
</reference>
<reference key="3">
    <citation type="journal article" date="2003" name="Nat. Biotechnol.">
        <title>Lectin affinity capture, isotope-coded tagging and mass spectrometry to identify N-linked glycoproteins.</title>
        <authorList>
            <person name="Kaji H."/>
            <person name="Saito H."/>
            <person name="Yamauchi Y."/>
            <person name="Shinkawa T."/>
            <person name="Taoka M."/>
            <person name="Hirabayashi J."/>
            <person name="Kasai K."/>
            <person name="Takahashi N."/>
            <person name="Isobe T."/>
        </authorList>
    </citation>
    <scope>GLYCOSYLATION [LARGE SCALE ANALYSIS] AT ASN-73</scope>
    <scope>IDENTIFICATION BY MASS SPECTROMETRY</scope>
    <source>
        <strain>Bristol N2</strain>
    </source>
</reference>